<sequence length="361" mass="39613">MSSTANNPQINSDEEENFLFAMQLASASVLPMVLKSAIELDLLELIKKAGAGAFVSPAELAAQLLTTNAEAHVMLDRILRLLTSYAILECRLKTLPDGGVQRLYGLAPVCKFLTKNEDGVSMAPLALMNQDKVLMESWYHLKDAVLDGGIPFNKAYGMTAFEYHGTDPRFNKVFNQGMSNHSTITMKKILETYTGFDGLKTVVDVGGGTGATLNMIISKYPSIKGINFDLPHVVEDAPSYPGVEHVGGDMFVSVPKGDAIFMKWICHDWSDAHCVKFLKKCYEALPENGKVILAECVLPEAPDTGLATKNVVHIDVIMLAHNPGGKERTEKEFQVLAKASGFKQFNKVCCAYNSWIMELLK</sequence>
<accession>Q9XGV9</accession>
<feature type="chain" id="PRO_0000063206" description="Caffeic acid 3-O-methyltransferase 2">
    <location>
        <begin position="1"/>
        <end position="361"/>
    </location>
</feature>
<feature type="region of interest" description="Substrate binding" evidence="1">
    <location>
        <begin position="160"/>
        <end position="178"/>
    </location>
</feature>
<feature type="active site" description="Proton acceptor" evidence="2">
    <location>
        <position position="267"/>
    </location>
</feature>
<feature type="binding site" evidence="1">
    <location>
        <begin position="128"/>
        <end position="134"/>
    </location>
    <ligand>
        <name>substrate</name>
    </ligand>
</feature>
<feature type="binding site" evidence="2">
    <location>
        <position position="206"/>
    </location>
    <ligand>
        <name>S-adenosyl-L-methionine</name>
        <dbReference type="ChEBI" id="CHEBI:59789"/>
    </ligand>
</feature>
<feature type="binding site" evidence="2">
    <location>
        <position position="229"/>
    </location>
    <ligand>
        <name>S-adenosyl-L-methionine</name>
        <dbReference type="ChEBI" id="CHEBI:59789"/>
    </ligand>
</feature>
<feature type="binding site" evidence="2">
    <location>
        <position position="249"/>
    </location>
    <ligand>
        <name>S-adenosyl-L-methionine</name>
        <dbReference type="ChEBI" id="CHEBI:59789"/>
    </ligand>
</feature>
<feature type="binding site" evidence="2">
    <location>
        <position position="250"/>
    </location>
    <ligand>
        <name>S-adenosyl-L-methionine</name>
        <dbReference type="ChEBI" id="CHEBI:59789"/>
    </ligand>
</feature>
<feature type="binding site" evidence="2">
    <location>
        <position position="263"/>
    </location>
    <ligand>
        <name>S-adenosyl-L-methionine</name>
        <dbReference type="ChEBI" id="CHEBI:59789"/>
    </ligand>
</feature>
<reference key="1">
    <citation type="online journal article" date="1999" name="Plant Gene Register">
        <title>Nucleotide sequences of two cDNAs encoding caffeic acid O-methyltransferases from sweet basil (Ocimum basilicum).</title>
        <authorList>
            <person name="Wang J."/>
            <person name="Dudareva N."/>
            <person name="Kish C.M."/>
            <person name="Simon J.E."/>
            <person name="Lewinsohn E."/>
            <person name="Pichersky E."/>
        </authorList>
        <locator>PGR99-105</locator>
    </citation>
    <scope>NUCLEOTIDE SEQUENCE [MRNA]</scope>
    <source>
        <strain>cv. EMX-1</strain>
    </source>
</reference>
<evidence type="ECO:0000250" key="1"/>
<evidence type="ECO:0000255" key="2">
    <source>
        <dbReference type="PROSITE-ProRule" id="PRU01020"/>
    </source>
</evidence>
<dbReference type="EC" id="2.1.1.68"/>
<dbReference type="EMBL" id="AF154918">
    <property type="protein sequence ID" value="AAD38190.1"/>
    <property type="molecule type" value="mRNA"/>
</dbReference>
<dbReference type="SMR" id="Q9XGV9"/>
<dbReference type="UniPathway" id="UPA00711"/>
<dbReference type="GO" id="GO:0047763">
    <property type="term" value="F:caffeate O-methyltransferase activity"/>
    <property type="evidence" value="ECO:0007669"/>
    <property type="project" value="UniProtKB-EC"/>
</dbReference>
<dbReference type="GO" id="GO:0046983">
    <property type="term" value="F:protein dimerization activity"/>
    <property type="evidence" value="ECO:0007669"/>
    <property type="project" value="InterPro"/>
</dbReference>
<dbReference type="GO" id="GO:0009809">
    <property type="term" value="P:lignin biosynthetic process"/>
    <property type="evidence" value="ECO:0007669"/>
    <property type="project" value="UniProtKB-KW"/>
</dbReference>
<dbReference type="GO" id="GO:0032259">
    <property type="term" value="P:methylation"/>
    <property type="evidence" value="ECO:0007669"/>
    <property type="project" value="UniProtKB-KW"/>
</dbReference>
<dbReference type="CDD" id="cd02440">
    <property type="entry name" value="AdoMet_MTases"/>
    <property type="match status" value="1"/>
</dbReference>
<dbReference type="FunFam" id="1.10.10.10:FF:000357">
    <property type="entry name" value="Caffeic acid 3-O-methyltransferase"/>
    <property type="match status" value="1"/>
</dbReference>
<dbReference type="FunFam" id="3.40.50.150:FF:000061">
    <property type="entry name" value="Caffeic acid O-methyltransferase"/>
    <property type="match status" value="1"/>
</dbReference>
<dbReference type="Gene3D" id="3.40.50.150">
    <property type="entry name" value="Vaccinia Virus protein VP39"/>
    <property type="match status" value="1"/>
</dbReference>
<dbReference type="Gene3D" id="1.10.10.10">
    <property type="entry name" value="Winged helix-like DNA-binding domain superfamily/Winged helix DNA-binding domain"/>
    <property type="match status" value="1"/>
</dbReference>
<dbReference type="InterPro" id="IPR016461">
    <property type="entry name" value="COMT-like"/>
</dbReference>
<dbReference type="InterPro" id="IPR001077">
    <property type="entry name" value="O_MeTrfase_dom"/>
</dbReference>
<dbReference type="InterPro" id="IPR012967">
    <property type="entry name" value="Plant_O-MeTrfase_dimerisation"/>
</dbReference>
<dbReference type="InterPro" id="IPR029063">
    <property type="entry name" value="SAM-dependent_MTases_sf"/>
</dbReference>
<dbReference type="InterPro" id="IPR036388">
    <property type="entry name" value="WH-like_DNA-bd_sf"/>
</dbReference>
<dbReference type="InterPro" id="IPR036390">
    <property type="entry name" value="WH_DNA-bd_sf"/>
</dbReference>
<dbReference type="PANTHER" id="PTHR11746">
    <property type="entry name" value="O-METHYLTRANSFERASE"/>
    <property type="match status" value="1"/>
</dbReference>
<dbReference type="Pfam" id="PF08100">
    <property type="entry name" value="Dimerisation"/>
    <property type="match status" value="1"/>
</dbReference>
<dbReference type="Pfam" id="PF00891">
    <property type="entry name" value="Methyltransf_2"/>
    <property type="match status" value="1"/>
</dbReference>
<dbReference type="PIRSF" id="PIRSF005739">
    <property type="entry name" value="O-mtase"/>
    <property type="match status" value="1"/>
</dbReference>
<dbReference type="SUPFAM" id="SSF53335">
    <property type="entry name" value="S-adenosyl-L-methionine-dependent methyltransferases"/>
    <property type="match status" value="1"/>
</dbReference>
<dbReference type="SUPFAM" id="SSF46785">
    <property type="entry name" value="Winged helix' DNA-binding domain"/>
    <property type="match status" value="1"/>
</dbReference>
<dbReference type="PROSITE" id="PS51683">
    <property type="entry name" value="SAM_OMT_II"/>
    <property type="match status" value="1"/>
</dbReference>
<proteinExistence type="evidence at transcript level"/>
<keyword id="KW-0438">Lignin biosynthesis</keyword>
<keyword id="KW-0489">Methyltransferase</keyword>
<keyword id="KW-0949">S-adenosyl-L-methionine</keyword>
<keyword id="KW-0808">Transferase</keyword>
<name>COMT2_OCIBA</name>
<gene>
    <name type="primary">COMT2</name>
</gene>
<comment type="function">
    <text>Catalyzes the conversion of caffeic acid to ferulic acid and of 5-hydroxyferulic acid to sinapic acid. The resulting products may subsequently be converted to the corresponding alcohols that are incorporated into lignins.</text>
</comment>
<comment type="catalytic activity">
    <reaction>
        <text>(E)-caffeate + S-adenosyl-L-methionine = (E)-ferulate + S-adenosyl-L-homocysteine + H(+)</text>
        <dbReference type="Rhea" id="RHEA:20225"/>
        <dbReference type="ChEBI" id="CHEBI:15378"/>
        <dbReference type="ChEBI" id="CHEBI:29749"/>
        <dbReference type="ChEBI" id="CHEBI:57770"/>
        <dbReference type="ChEBI" id="CHEBI:57856"/>
        <dbReference type="ChEBI" id="CHEBI:59789"/>
        <dbReference type="EC" id="2.1.1.68"/>
    </reaction>
</comment>
<comment type="pathway">
    <text>Aromatic compound metabolism; phenylpropanoid biosynthesis.</text>
</comment>
<comment type="subunit">
    <text evidence="1">Homodimer.</text>
</comment>
<comment type="similarity">
    <text evidence="2">Belongs to the class I-like SAM-binding methyltransferase superfamily. Cation-independent O-methyltransferase family. COMT subfamily.</text>
</comment>
<organism>
    <name type="scientific">Ocimum basilicum</name>
    <name type="common">Sweet basil</name>
    <dbReference type="NCBI Taxonomy" id="39350"/>
    <lineage>
        <taxon>Eukaryota</taxon>
        <taxon>Viridiplantae</taxon>
        <taxon>Streptophyta</taxon>
        <taxon>Embryophyta</taxon>
        <taxon>Tracheophyta</taxon>
        <taxon>Spermatophyta</taxon>
        <taxon>Magnoliopsida</taxon>
        <taxon>eudicotyledons</taxon>
        <taxon>Gunneridae</taxon>
        <taxon>Pentapetalae</taxon>
        <taxon>asterids</taxon>
        <taxon>lamiids</taxon>
        <taxon>Lamiales</taxon>
        <taxon>Lamiaceae</taxon>
        <taxon>Nepetoideae</taxon>
        <taxon>Ocimeae</taxon>
        <taxon>Ociminae</taxon>
        <taxon>Ocimum</taxon>
    </lineage>
</organism>
<protein>
    <recommendedName>
        <fullName>Caffeic acid 3-O-methyltransferase 2</fullName>
        <shortName>CAOMT-2</shortName>
        <shortName>COMT-2</shortName>
        <ecNumber>2.1.1.68</ecNumber>
    </recommendedName>
    <alternativeName>
        <fullName>S-adenosysl-L-methionine:caffeic acid 3-O-methyltransferase 2</fullName>
    </alternativeName>
</protein>